<proteinExistence type="inferred from homology"/>
<name>ASTE_ERWT9</name>
<reference key="1">
    <citation type="journal article" date="2008" name="Environ. Microbiol.">
        <title>The genome of Erwinia tasmaniensis strain Et1/99, a non-pathogenic bacterium in the genus Erwinia.</title>
        <authorList>
            <person name="Kube M."/>
            <person name="Migdoll A.M."/>
            <person name="Mueller I."/>
            <person name="Kuhl H."/>
            <person name="Beck A."/>
            <person name="Reinhardt R."/>
            <person name="Geider K."/>
        </authorList>
    </citation>
    <scope>NUCLEOTIDE SEQUENCE [LARGE SCALE GENOMIC DNA]</scope>
    <source>
        <strain>DSM 17950 / CFBP 7177 / CIP 109463 / NCPPB 4357 / Et1/99</strain>
    </source>
</reference>
<dbReference type="EC" id="3.5.1.96" evidence="1"/>
<dbReference type="EMBL" id="CU468135">
    <property type="protein sequence ID" value="CAO96901.1"/>
    <property type="molecule type" value="Genomic_DNA"/>
</dbReference>
<dbReference type="RefSeq" id="WP_012441585.1">
    <property type="nucleotide sequence ID" value="NC_010694.1"/>
</dbReference>
<dbReference type="SMR" id="B2VEK5"/>
<dbReference type="STRING" id="465817.ETA_18550"/>
<dbReference type="KEGG" id="eta:ETA_18550"/>
<dbReference type="eggNOG" id="COG2988">
    <property type="taxonomic scope" value="Bacteria"/>
</dbReference>
<dbReference type="HOGENOM" id="CLU_071608_0_0_6"/>
<dbReference type="OrthoDB" id="5290473at2"/>
<dbReference type="UniPathway" id="UPA00185">
    <property type="reaction ID" value="UER00283"/>
</dbReference>
<dbReference type="Proteomes" id="UP000001726">
    <property type="component" value="Chromosome"/>
</dbReference>
<dbReference type="GO" id="GO:0016788">
    <property type="term" value="F:hydrolase activity, acting on ester bonds"/>
    <property type="evidence" value="ECO:0007669"/>
    <property type="project" value="UniProtKB-UniRule"/>
</dbReference>
<dbReference type="GO" id="GO:0009017">
    <property type="term" value="F:succinylglutamate desuccinylase activity"/>
    <property type="evidence" value="ECO:0007669"/>
    <property type="project" value="UniProtKB-EC"/>
</dbReference>
<dbReference type="GO" id="GO:0008270">
    <property type="term" value="F:zinc ion binding"/>
    <property type="evidence" value="ECO:0007669"/>
    <property type="project" value="UniProtKB-UniRule"/>
</dbReference>
<dbReference type="GO" id="GO:0019544">
    <property type="term" value="P:arginine catabolic process to glutamate"/>
    <property type="evidence" value="ECO:0007669"/>
    <property type="project" value="UniProtKB-UniRule"/>
</dbReference>
<dbReference type="GO" id="GO:0019545">
    <property type="term" value="P:arginine catabolic process to succinate"/>
    <property type="evidence" value="ECO:0007669"/>
    <property type="project" value="UniProtKB-UniRule"/>
</dbReference>
<dbReference type="CDD" id="cd03855">
    <property type="entry name" value="M14_ASTE"/>
    <property type="match status" value="1"/>
</dbReference>
<dbReference type="FunFam" id="3.40.630.10:FF:000017">
    <property type="entry name" value="Succinylglutamate desuccinylase"/>
    <property type="match status" value="1"/>
</dbReference>
<dbReference type="Gene3D" id="3.40.630.10">
    <property type="entry name" value="Zn peptidases"/>
    <property type="match status" value="1"/>
</dbReference>
<dbReference type="HAMAP" id="MF_00767">
    <property type="entry name" value="Arg_catab_AstE"/>
    <property type="match status" value="1"/>
</dbReference>
<dbReference type="InterPro" id="IPR050178">
    <property type="entry name" value="AspA/AstE_fam"/>
</dbReference>
<dbReference type="InterPro" id="IPR055438">
    <property type="entry name" value="AstE_AspA_cat"/>
</dbReference>
<dbReference type="InterPro" id="IPR007036">
    <property type="entry name" value="Aste_AspA_hybrid_dom"/>
</dbReference>
<dbReference type="InterPro" id="IPR016681">
    <property type="entry name" value="SuccinylGlu_desuccinylase"/>
</dbReference>
<dbReference type="NCBIfam" id="TIGR03242">
    <property type="entry name" value="arg_catab_astE"/>
    <property type="match status" value="1"/>
</dbReference>
<dbReference type="NCBIfam" id="NF003706">
    <property type="entry name" value="PRK05324.1"/>
    <property type="match status" value="1"/>
</dbReference>
<dbReference type="PANTHER" id="PTHR15162">
    <property type="entry name" value="ASPARTOACYLASE"/>
    <property type="match status" value="1"/>
</dbReference>
<dbReference type="PANTHER" id="PTHR15162:SF7">
    <property type="entry name" value="SUCCINYLGLUTAMATE DESUCCINYLASE"/>
    <property type="match status" value="1"/>
</dbReference>
<dbReference type="Pfam" id="PF24827">
    <property type="entry name" value="AstE_AspA_cat"/>
    <property type="match status" value="1"/>
</dbReference>
<dbReference type="Pfam" id="PF04952">
    <property type="entry name" value="AstE_AspA_hybrid"/>
    <property type="match status" value="1"/>
</dbReference>
<dbReference type="PIRSF" id="PIRSF017020">
    <property type="entry name" value="AstE"/>
    <property type="match status" value="1"/>
</dbReference>
<dbReference type="SUPFAM" id="SSF53187">
    <property type="entry name" value="Zn-dependent exopeptidases"/>
    <property type="match status" value="1"/>
</dbReference>
<accession>B2VEK5</accession>
<protein>
    <recommendedName>
        <fullName evidence="1">Succinylglutamate desuccinylase</fullName>
        <ecNumber evidence="1">3.5.1.96</ecNumber>
    </recommendedName>
</protein>
<feature type="chain" id="PRO_1000133634" description="Succinylglutamate desuccinylase">
    <location>
        <begin position="1"/>
        <end position="329"/>
    </location>
</feature>
<feature type="active site" evidence="1">
    <location>
        <position position="211"/>
    </location>
</feature>
<feature type="binding site" evidence="1">
    <location>
        <position position="53"/>
    </location>
    <ligand>
        <name>Zn(2+)</name>
        <dbReference type="ChEBI" id="CHEBI:29105"/>
    </ligand>
</feature>
<feature type="binding site" evidence="1">
    <location>
        <position position="56"/>
    </location>
    <ligand>
        <name>Zn(2+)</name>
        <dbReference type="ChEBI" id="CHEBI:29105"/>
    </ligand>
</feature>
<feature type="binding site" evidence="1">
    <location>
        <position position="148"/>
    </location>
    <ligand>
        <name>Zn(2+)</name>
        <dbReference type="ChEBI" id="CHEBI:29105"/>
    </ligand>
</feature>
<evidence type="ECO:0000255" key="1">
    <source>
        <dbReference type="HAMAP-Rule" id="MF_00767"/>
    </source>
</evidence>
<keyword id="KW-0056">Arginine metabolism</keyword>
<keyword id="KW-0378">Hydrolase</keyword>
<keyword id="KW-0479">Metal-binding</keyword>
<keyword id="KW-1185">Reference proteome</keyword>
<keyword id="KW-0862">Zinc</keyword>
<gene>
    <name evidence="1" type="primary">astE</name>
    <name type="ordered locus">ETA_18550</name>
</gene>
<organism>
    <name type="scientific">Erwinia tasmaniensis (strain DSM 17950 / CFBP 7177 / CIP 109463 / NCPPB 4357 / Et1/99)</name>
    <dbReference type="NCBI Taxonomy" id="465817"/>
    <lineage>
        <taxon>Bacteria</taxon>
        <taxon>Pseudomonadati</taxon>
        <taxon>Pseudomonadota</taxon>
        <taxon>Gammaproteobacteria</taxon>
        <taxon>Enterobacterales</taxon>
        <taxon>Erwiniaceae</taxon>
        <taxon>Erwinia</taxon>
    </lineage>
</organism>
<sequence length="329" mass="37247">MQDFLQLTLSGGQPEQKEGRNGLLRWRWLNVGILELTPLHSVPRALVVSSGIHGNETAPVEIVEQLVNALLRGELALQARLLVIYGNPAALRLNRRYVHGDMNRMFGGRWQQYEDCPEARRAWILEQAMDNFWQAGDYEEVRWHLDLHTAIRGSYHAQFGVLPQRMTPWPEDFMHWLASAGLEALVFHRATGGTFTNYSSRHFQAASCTLELGTALPFGHNDLTQFAAVRLALRQLIAGGENIPAAAQPRRYRVSQQITRRSDRFVLHMSDEVLNFTAFPQGTLLAEDGEDRVYVQQAREYVLFPNPNVATGLRAGLMLVEDNVHNKAL</sequence>
<comment type="function">
    <text evidence="1">Transforms N(2)-succinylglutamate into succinate and glutamate.</text>
</comment>
<comment type="catalytic activity">
    <reaction evidence="1">
        <text>N-succinyl-L-glutamate + H2O = L-glutamate + succinate</text>
        <dbReference type="Rhea" id="RHEA:15169"/>
        <dbReference type="ChEBI" id="CHEBI:15377"/>
        <dbReference type="ChEBI" id="CHEBI:29985"/>
        <dbReference type="ChEBI" id="CHEBI:30031"/>
        <dbReference type="ChEBI" id="CHEBI:58763"/>
        <dbReference type="EC" id="3.5.1.96"/>
    </reaction>
</comment>
<comment type="cofactor">
    <cofactor evidence="1">
        <name>Zn(2+)</name>
        <dbReference type="ChEBI" id="CHEBI:29105"/>
    </cofactor>
    <text evidence="1">Binds 1 zinc ion per subunit.</text>
</comment>
<comment type="pathway">
    <text evidence="1">Amino-acid degradation; L-arginine degradation via AST pathway; L-glutamate and succinate from L-arginine: step 5/5.</text>
</comment>
<comment type="similarity">
    <text evidence="1">Belongs to the AspA/AstE family. Succinylglutamate desuccinylase subfamily.</text>
</comment>